<evidence type="ECO:0000250" key="1"/>
<evidence type="ECO:0000250" key="2">
    <source>
        <dbReference type="UniProtKB" id="P03300"/>
    </source>
</evidence>
<evidence type="ECO:0000250" key="3">
    <source>
        <dbReference type="UniProtKB" id="P03304"/>
    </source>
</evidence>
<evidence type="ECO:0000250" key="4">
    <source>
        <dbReference type="UniProtKB" id="P03305"/>
    </source>
</evidence>
<evidence type="ECO:0000250" key="5">
    <source>
        <dbReference type="UniProtKB" id="P08545"/>
    </source>
</evidence>
<evidence type="ECO:0000250" key="6">
    <source>
        <dbReference type="UniProtKB" id="P08617"/>
    </source>
</evidence>
<evidence type="ECO:0000250" key="7">
    <source>
        <dbReference type="UniProtKB" id="P12296"/>
    </source>
</evidence>
<evidence type="ECO:0000250" key="8">
    <source>
        <dbReference type="UniProtKB" id="Q66282"/>
    </source>
</evidence>
<evidence type="ECO:0000255" key="9"/>
<evidence type="ECO:0000255" key="10">
    <source>
        <dbReference type="PROSITE-ProRule" id="PRU00539"/>
    </source>
</evidence>
<evidence type="ECO:0000255" key="11">
    <source>
        <dbReference type="PROSITE-ProRule" id="PRU00551"/>
    </source>
</evidence>
<evidence type="ECO:0000255" key="12">
    <source>
        <dbReference type="PROSITE-ProRule" id="PRU01222"/>
    </source>
</evidence>
<evidence type="ECO:0000269" key="13">
    <source>
    </source>
</evidence>
<evidence type="ECO:0000269" key="14">
    <source>
    </source>
</evidence>
<evidence type="ECO:0000269" key="15">
    <source>
    </source>
</evidence>
<evidence type="ECO:0000269" key="16">
    <source>
    </source>
</evidence>
<evidence type="ECO:0000269" key="17">
    <source>
    </source>
</evidence>
<evidence type="ECO:0000269" key="18">
    <source>
    </source>
</evidence>
<evidence type="ECO:0000269" key="19">
    <source>
    </source>
</evidence>
<evidence type="ECO:0000269" key="20">
    <source>
    </source>
</evidence>
<evidence type="ECO:0000269" key="21">
    <source>
    </source>
</evidence>
<evidence type="ECO:0000269" key="22">
    <source>
    </source>
</evidence>
<evidence type="ECO:0000269" key="23">
    <source>
    </source>
</evidence>
<evidence type="ECO:0000305" key="24"/>
<organismHost>
    <name type="scientific">Homo sapiens</name>
    <name type="common">Human</name>
    <dbReference type="NCBI Taxonomy" id="9606"/>
</organismHost>
<organismHost>
    <name type="scientific">Mus musculus</name>
    <name type="common">Mouse</name>
    <dbReference type="NCBI Taxonomy" id="10090"/>
</organismHost>
<organismHost>
    <name type="scientific">Sigmodon hispidus</name>
    <name type="common">Hispid cotton rat</name>
    <dbReference type="NCBI Taxonomy" id="42415"/>
</organismHost>
<organismHost>
    <name type="scientific">Sus scrofa</name>
    <name type="common">Pig</name>
    <dbReference type="NCBI Taxonomy" id="9823"/>
</organismHost>
<name>POLG_EMCVR</name>
<protein>
    <recommendedName>
        <fullName>Genome polyprotein</fullName>
    </recommendedName>
    <component>
        <recommendedName>
            <fullName>Leader protein</fullName>
            <shortName>L</shortName>
        </recommendedName>
    </component>
    <component>
        <recommendedName>
            <fullName>Capsid protein VP0</fullName>
        </recommendedName>
        <alternativeName>
            <fullName>VP4-VP2</fullName>
        </alternativeName>
    </component>
    <component>
        <recommendedName>
            <fullName>Capsid protein VP4</fullName>
        </recommendedName>
        <alternativeName>
            <fullName>P1A</fullName>
        </alternativeName>
        <alternativeName>
            <fullName>Rho</fullName>
        </alternativeName>
        <alternativeName>
            <fullName>Virion protein 4</fullName>
        </alternativeName>
    </component>
    <component>
        <recommendedName>
            <fullName>Capsid protein VP2</fullName>
        </recommendedName>
        <alternativeName>
            <fullName>Beta</fullName>
        </alternativeName>
        <alternativeName>
            <fullName>P1B</fullName>
        </alternativeName>
        <alternativeName>
            <fullName>Virion protein 2</fullName>
        </alternativeName>
    </component>
    <component>
        <recommendedName>
            <fullName>Capsid protein VP3</fullName>
        </recommendedName>
        <alternativeName>
            <fullName>Gamma</fullName>
        </alternativeName>
        <alternativeName>
            <fullName>P1C</fullName>
        </alternativeName>
        <alternativeName>
            <fullName>Virion protein 3</fullName>
        </alternativeName>
    </component>
    <component>
        <recommendedName>
            <fullName>Capsid protein VP1</fullName>
        </recommendedName>
        <alternativeName>
            <fullName>Alpha</fullName>
        </alternativeName>
        <alternativeName>
            <fullName>P1D</fullName>
        </alternativeName>
        <alternativeName>
            <fullName>Virion protein 1</fullName>
        </alternativeName>
    </component>
    <component>
        <recommendedName>
            <fullName>Protein 2A</fullName>
            <shortName>P2A</shortName>
        </recommendedName>
        <alternativeName>
            <fullName>G</fullName>
        </alternativeName>
    </component>
    <component>
        <recommendedName>
            <fullName>Protein 2B</fullName>
            <shortName>I</shortName>
            <shortName>P2B</shortName>
        </recommendedName>
    </component>
    <component>
        <recommendedName>
            <fullName>Protein 2C</fullName>
            <shortName>C</shortName>
            <shortName>P2C</shortName>
            <ecNumber>3.6.4.13</ecNumber>
        </recommendedName>
    </component>
    <component>
        <recommendedName>
            <fullName>Protein 3A</fullName>
            <shortName>P3A</shortName>
        </recommendedName>
    </component>
    <component>
        <recommendedName>
            <fullName>VPg</fullName>
            <shortName>P3B</shortName>
        </recommendedName>
        <alternativeName>
            <fullName>H</fullName>
        </alternativeName>
        <alternativeName>
            <fullName>Protein 3B</fullName>
        </alternativeName>
    </component>
    <component>
        <recommendedName>
            <fullName>Protease 3C</fullName>
            <shortName>P3C</shortName>
            <ecNumber evidence="7">3.4.22.28</ecNumber>
        </recommendedName>
        <alternativeName>
            <fullName>Picornain 3C</fullName>
        </alternativeName>
        <alternativeName>
            <fullName>p22</fullName>
        </alternativeName>
    </component>
    <component>
        <recommendedName>
            <fullName>RNA-directed RNA polymerase</fullName>
            <shortName>RdRp</shortName>
            <ecNumber evidence="10">2.7.7.48</ecNumber>
        </recommendedName>
        <alternativeName>
            <fullName>3D polymerase</fullName>
            <shortName>3Dpol</shortName>
        </alternativeName>
        <alternativeName>
            <fullName>E</fullName>
        </alternativeName>
        <alternativeName>
            <fullName>Protein 3D</fullName>
            <shortName>3D</shortName>
        </alternativeName>
    </component>
</protein>
<dbReference type="EC" id="3.6.4.13"/>
<dbReference type="EC" id="3.4.22.28" evidence="7"/>
<dbReference type="EC" id="2.7.7.48" evidence="10"/>
<dbReference type="EMBL" id="M81861">
    <property type="protein sequence ID" value="AAA43037.1"/>
    <property type="molecule type" value="Genomic_RNA"/>
</dbReference>
<dbReference type="RefSeq" id="NP_056777.1">
    <property type="nucleotide sequence ID" value="NC_001479.1"/>
</dbReference>
<dbReference type="SMR" id="Q66765"/>
<dbReference type="MEROPS" id="C03.009"/>
<dbReference type="iPTMnet" id="Q66765"/>
<dbReference type="GeneID" id="1493923"/>
<dbReference type="KEGG" id="vg:1493923"/>
<dbReference type="Proteomes" id="UP000002319">
    <property type="component" value="Genome"/>
</dbReference>
<dbReference type="GO" id="GO:0044162">
    <property type="term" value="C:host cell cytoplasmic vesicle membrane"/>
    <property type="evidence" value="ECO:0007669"/>
    <property type="project" value="UniProtKB-SubCell"/>
</dbReference>
<dbReference type="GO" id="GO:0044196">
    <property type="term" value="C:host cell nucleolus"/>
    <property type="evidence" value="ECO:0007669"/>
    <property type="project" value="UniProtKB-SubCell"/>
</dbReference>
<dbReference type="GO" id="GO:0016020">
    <property type="term" value="C:membrane"/>
    <property type="evidence" value="ECO:0007669"/>
    <property type="project" value="UniProtKB-KW"/>
</dbReference>
<dbReference type="GO" id="GO:0039618">
    <property type="term" value="C:T=pseudo3 icosahedral viral capsid"/>
    <property type="evidence" value="ECO:0007669"/>
    <property type="project" value="UniProtKB-KW"/>
</dbReference>
<dbReference type="GO" id="GO:0005524">
    <property type="term" value="F:ATP binding"/>
    <property type="evidence" value="ECO:0007669"/>
    <property type="project" value="UniProtKB-KW"/>
</dbReference>
<dbReference type="GO" id="GO:0016887">
    <property type="term" value="F:ATP hydrolysis activity"/>
    <property type="evidence" value="ECO:0007669"/>
    <property type="project" value="RHEA"/>
</dbReference>
<dbReference type="GO" id="GO:0015267">
    <property type="term" value="F:channel activity"/>
    <property type="evidence" value="ECO:0007669"/>
    <property type="project" value="UniProtKB-KW"/>
</dbReference>
<dbReference type="GO" id="GO:0004197">
    <property type="term" value="F:cysteine-type endopeptidase activity"/>
    <property type="evidence" value="ECO:0007669"/>
    <property type="project" value="UniProtKB-EC"/>
</dbReference>
<dbReference type="GO" id="GO:0003723">
    <property type="term" value="F:RNA binding"/>
    <property type="evidence" value="ECO:0007669"/>
    <property type="project" value="UniProtKB-KW"/>
</dbReference>
<dbReference type="GO" id="GO:0003724">
    <property type="term" value="F:RNA helicase activity"/>
    <property type="evidence" value="ECO:0007669"/>
    <property type="project" value="UniProtKB-EC"/>
</dbReference>
<dbReference type="GO" id="GO:0003968">
    <property type="term" value="F:RNA-directed RNA polymerase activity"/>
    <property type="evidence" value="ECO:0007669"/>
    <property type="project" value="UniProtKB-KW"/>
</dbReference>
<dbReference type="GO" id="GO:0005198">
    <property type="term" value="F:structural molecule activity"/>
    <property type="evidence" value="ECO:0007669"/>
    <property type="project" value="InterPro"/>
</dbReference>
<dbReference type="GO" id="GO:0008270">
    <property type="term" value="F:zinc ion binding"/>
    <property type="evidence" value="ECO:0007669"/>
    <property type="project" value="UniProtKB-KW"/>
</dbReference>
<dbReference type="GO" id="GO:0006351">
    <property type="term" value="P:DNA-templated transcription"/>
    <property type="evidence" value="ECO:0007669"/>
    <property type="project" value="InterPro"/>
</dbReference>
<dbReference type="GO" id="GO:0034220">
    <property type="term" value="P:monoatomic ion transmembrane transport"/>
    <property type="evidence" value="ECO:0007669"/>
    <property type="project" value="UniProtKB-KW"/>
</dbReference>
<dbReference type="GO" id="GO:0006508">
    <property type="term" value="P:proteolysis"/>
    <property type="evidence" value="ECO:0007669"/>
    <property type="project" value="UniProtKB-KW"/>
</dbReference>
<dbReference type="GO" id="GO:0046718">
    <property type="term" value="P:symbiont entry into host cell"/>
    <property type="evidence" value="ECO:0007669"/>
    <property type="project" value="UniProtKB-KW"/>
</dbReference>
<dbReference type="GO" id="GO:0039520">
    <property type="term" value="P:symbiont-mediated activation of host autophagy"/>
    <property type="evidence" value="ECO:0000250"/>
    <property type="project" value="UniProtKB"/>
</dbReference>
<dbReference type="GO" id="GO:0039540">
    <property type="term" value="P:symbiont-mediated suppression of host cytoplasmic pattern recognition receptor signaling pathway via inhibition of RIG-I activity"/>
    <property type="evidence" value="ECO:0000314"/>
    <property type="project" value="UniProtKB"/>
</dbReference>
<dbReference type="GO" id="GO:0039522">
    <property type="term" value="P:symbiont-mediated suppression of host mRNA export from nucleus"/>
    <property type="evidence" value="ECO:0007669"/>
    <property type="project" value="UniProtKB-KW"/>
</dbReference>
<dbReference type="GO" id="GO:0039694">
    <property type="term" value="P:viral RNA genome replication"/>
    <property type="evidence" value="ECO:0007669"/>
    <property type="project" value="InterPro"/>
</dbReference>
<dbReference type="GO" id="GO:0075523">
    <property type="term" value="P:viral translational frameshifting"/>
    <property type="evidence" value="ECO:0007669"/>
    <property type="project" value="UniProtKB-KW"/>
</dbReference>
<dbReference type="GO" id="GO:0019062">
    <property type="term" value="P:virion attachment to host cell"/>
    <property type="evidence" value="ECO:0007669"/>
    <property type="project" value="UniProtKB-KW"/>
</dbReference>
<dbReference type="CDD" id="cd23211">
    <property type="entry name" value="Cardiovirus_RdRp"/>
    <property type="match status" value="1"/>
</dbReference>
<dbReference type="CDD" id="cd00205">
    <property type="entry name" value="rhv_like"/>
    <property type="match status" value="3"/>
</dbReference>
<dbReference type="FunFam" id="1.20.960.20:FF:000002">
    <property type="entry name" value="Genome polyprotein"/>
    <property type="match status" value="1"/>
</dbReference>
<dbReference type="FunFam" id="2.40.10.10:FF:000145">
    <property type="entry name" value="Genome polyprotein"/>
    <property type="match status" value="1"/>
</dbReference>
<dbReference type="FunFam" id="2.60.120.20:FF:000009">
    <property type="entry name" value="Genome polyprotein"/>
    <property type="match status" value="1"/>
</dbReference>
<dbReference type="FunFam" id="2.60.120.20:FF:000013">
    <property type="entry name" value="Genome polyprotein"/>
    <property type="match status" value="1"/>
</dbReference>
<dbReference type="FunFam" id="3.30.70.270:FF:000046">
    <property type="entry name" value="Genome polyprotein"/>
    <property type="match status" value="1"/>
</dbReference>
<dbReference type="FunFam" id="3.30.70.270:FF:000065">
    <property type="entry name" value="Genome polyprotein"/>
    <property type="match status" value="1"/>
</dbReference>
<dbReference type="FunFam" id="4.10.90.10:FF:000002">
    <property type="entry name" value="Genome polyprotein"/>
    <property type="match status" value="1"/>
</dbReference>
<dbReference type="Gene3D" id="1.20.960.20">
    <property type="match status" value="1"/>
</dbReference>
<dbReference type="Gene3D" id="2.60.120.20">
    <property type="match status" value="3"/>
</dbReference>
<dbReference type="Gene3D" id="3.30.70.270">
    <property type="match status" value="2"/>
</dbReference>
<dbReference type="Gene3D" id="4.10.90.10">
    <property type="entry name" value="Capsid protein VP4 superfamily, Picornavirus"/>
    <property type="match status" value="1"/>
</dbReference>
<dbReference type="Gene3D" id="2.40.10.10">
    <property type="entry name" value="Trypsin-like serine proteases"/>
    <property type="match status" value="1"/>
</dbReference>
<dbReference type="InterPro" id="IPR015031">
    <property type="entry name" value="Capsid_VP4_Picornavir"/>
</dbReference>
<dbReference type="InterPro" id="IPR037080">
    <property type="entry name" value="Capsid_VP4_sf_Picornavirus"/>
</dbReference>
<dbReference type="InterPro" id="IPR043502">
    <property type="entry name" value="DNA/RNA_pol_sf"/>
</dbReference>
<dbReference type="InterPro" id="IPR004004">
    <property type="entry name" value="Helic/Pol/Pept_Calicivir-typ"/>
</dbReference>
<dbReference type="InterPro" id="IPR000605">
    <property type="entry name" value="Helicase_SF3_ssDNA/RNA_vir"/>
</dbReference>
<dbReference type="InterPro" id="IPR014759">
    <property type="entry name" value="Helicase_SF3_ssRNA_vir"/>
</dbReference>
<dbReference type="InterPro" id="IPR021573">
    <property type="entry name" value="Leader_pept_picornaV"/>
</dbReference>
<dbReference type="InterPro" id="IPR044067">
    <property type="entry name" value="PCV_3C_PRO"/>
</dbReference>
<dbReference type="InterPro" id="IPR000199">
    <property type="entry name" value="Peptidase_C3A/C3B_picornavir"/>
</dbReference>
<dbReference type="InterPro" id="IPR009003">
    <property type="entry name" value="Peptidase_S1_PA"/>
</dbReference>
<dbReference type="InterPro" id="IPR043504">
    <property type="entry name" value="Peptidase_S1_PA_chymotrypsin"/>
</dbReference>
<dbReference type="InterPro" id="IPR001676">
    <property type="entry name" value="Picornavirus_capsid"/>
</dbReference>
<dbReference type="InterPro" id="IPR043128">
    <property type="entry name" value="Rev_trsase/Diguanyl_cyclase"/>
</dbReference>
<dbReference type="InterPro" id="IPR033703">
    <property type="entry name" value="Rhv-like"/>
</dbReference>
<dbReference type="InterPro" id="IPR001205">
    <property type="entry name" value="RNA-dir_pol_C"/>
</dbReference>
<dbReference type="InterPro" id="IPR007094">
    <property type="entry name" value="RNA-dir_pol_PSvirus"/>
</dbReference>
<dbReference type="InterPro" id="IPR029053">
    <property type="entry name" value="Viral_coat"/>
</dbReference>
<dbReference type="InterPro" id="IPR037243">
    <property type="entry name" value="Viral_lead_polypep_zc_finger"/>
</dbReference>
<dbReference type="Pfam" id="PF00548">
    <property type="entry name" value="Peptidase_C3"/>
    <property type="match status" value="1"/>
</dbReference>
<dbReference type="Pfam" id="PF00680">
    <property type="entry name" value="RdRP_1"/>
    <property type="match status" value="1"/>
</dbReference>
<dbReference type="Pfam" id="PF00073">
    <property type="entry name" value="Rhv"/>
    <property type="match status" value="2"/>
</dbReference>
<dbReference type="Pfam" id="PF22663">
    <property type="entry name" value="Rhv_5"/>
    <property type="match status" value="1"/>
</dbReference>
<dbReference type="Pfam" id="PF00910">
    <property type="entry name" value="RNA_helicase"/>
    <property type="match status" value="1"/>
</dbReference>
<dbReference type="Pfam" id="PF08935">
    <property type="entry name" value="VP4_2"/>
    <property type="match status" value="1"/>
</dbReference>
<dbReference type="Pfam" id="PF11475">
    <property type="entry name" value="VP_N-CPKC"/>
    <property type="match status" value="1"/>
</dbReference>
<dbReference type="PRINTS" id="PR00918">
    <property type="entry name" value="CALICVIRUSNS"/>
</dbReference>
<dbReference type="SUPFAM" id="SSF56672">
    <property type="entry name" value="DNA/RNA polymerases"/>
    <property type="match status" value="1"/>
</dbReference>
<dbReference type="SUPFAM" id="SSF88633">
    <property type="entry name" value="Positive stranded ssRNA viruses"/>
    <property type="match status" value="2"/>
</dbReference>
<dbReference type="SUPFAM" id="SSF50494">
    <property type="entry name" value="Trypsin-like serine proteases"/>
    <property type="match status" value="1"/>
</dbReference>
<dbReference type="SUPFAM" id="SSF144251">
    <property type="entry name" value="Viral leader polypeptide zinc finger"/>
    <property type="match status" value="1"/>
</dbReference>
<dbReference type="PROSITE" id="PS51874">
    <property type="entry name" value="PCV_3C_PRO"/>
    <property type="match status" value="1"/>
</dbReference>
<dbReference type="PROSITE" id="PS50507">
    <property type="entry name" value="RDRP_SSRNA_POS"/>
    <property type="match status" value="1"/>
</dbReference>
<dbReference type="PROSITE" id="PS51218">
    <property type="entry name" value="SF3_HELICASE_2"/>
    <property type="match status" value="1"/>
</dbReference>
<proteinExistence type="evidence at protein level"/>
<feature type="chain" id="PRO_0000446100" description="Genome polyprotein">
    <location>
        <begin position="1"/>
        <end position="2292"/>
    </location>
</feature>
<feature type="chain" id="PRO_0000423146" description="Leader protein">
    <location>
        <begin position="1"/>
        <end position="67"/>
    </location>
</feature>
<feature type="chain" id="PRO_0000423147" description="Capsid protein VP0">
    <location>
        <begin position="68"/>
        <end position="393"/>
    </location>
</feature>
<feature type="chain" id="PRO_5000143569" description="Capsid protein VP4">
    <location>
        <begin position="68"/>
        <end position="137"/>
    </location>
</feature>
<feature type="chain" id="PRO_5000143570" description="Capsid protein VP2">
    <location>
        <begin position="138"/>
        <end position="393"/>
    </location>
</feature>
<feature type="chain" id="PRO_5000143571" description="Capsid protein VP3">
    <location>
        <begin position="394"/>
        <end position="624"/>
    </location>
</feature>
<feature type="chain" id="PRO_5000143572" description="Capsid protein VP1">
    <location>
        <begin position="625"/>
        <end position="901"/>
    </location>
</feature>
<feature type="chain" id="PRO_5000143573" description="Protein 2A">
    <location>
        <begin position="902"/>
        <end position="1044"/>
    </location>
</feature>
<feature type="chain" id="PRO_5000143574" description="Protein 2B">
    <location>
        <begin position="1045"/>
        <end position="1194"/>
    </location>
</feature>
<feature type="chain" id="PRO_5000143575" description="Protein 2C">
    <location>
        <begin position="1195"/>
        <end position="1519"/>
    </location>
</feature>
<feature type="chain" id="PRO_5000143576" description="Protein 3A">
    <location>
        <begin position="1520"/>
        <end position="1607"/>
    </location>
</feature>
<feature type="chain" id="PRO_0000423148" description="VPg">
    <location>
        <begin position="1608"/>
        <end position="1627"/>
    </location>
</feature>
<feature type="chain" id="PRO_5000143577" description="Protease 3C">
    <location>
        <begin position="1628"/>
        <end position="1832"/>
    </location>
</feature>
<feature type="chain" id="PRO_5000143578" description="RNA-directed RNA polymerase">
    <location>
        <begin position="1833"/>
        <end position="2292"/>
    </location>
</feature>
<feature type="domain" description="SF3 helicase" evidence="11">
    <location>
        <begin position="1281"/>
        <end position="1447"/>
    </location>
</feature>
<feature type="domain" description="Peptidase C3" evidence="12">
    <location>
        <begin position="1630"/>
        <end position="1822"/>
    </location>
</feature>
<feature type="domain" description="RdRp catalytic" evidence="10">
    <location>
        <begin position="2061"/>
        <end position="2179"/>
    </location>
</feature>
<feature type="zinc finger region" evidence="7">
    <location>
        <begin position="10"/>
        <end position="22"/>
    </location>
</feature>
<feature type="region of interest" description="Acidic" evidence="24">
    <location>
        <begin position="37"/>
        <end position="61"/>
    </location>
</feature>
<feature type="region of interest" description="Host EIF4E binding" evidence="18">
    <location>
        <begin position="1030"/>
        <end position="1036"/>
    </location>
</feature>
<feature type="short sequence motif" description="Nuclear localization signal" evidence="18">
    <location>
        <begin position="995"/>
        <end position="1003"/>
    </location>
</feature>
<feature type="active site" description="For protease 3C activity" evidence="12">
    <location>
        <position position="1673"/>
    </location>
</feature>
<feature type="active site" description="For protease 3C activity" evidence="12">
    <location>
        <position position="1707"/>
    </location>
</feature>
<feature type="active site" description="For protease 3C activity" evidence="12">
    <location>
        <position position="1786"/>
    </location>
</feature>
<feature type="active site" description="For RdRp activity" evidence="7">
    <location>
        <position position="2067"/>
    </location>
</feature>
<feature type="active site" description="For RdRp activity" evidence="7">
    <location>
        <position position="2165"/>
    </location>
</feature>
<feature type="binding site" evidence="7">
    <location>
        <position position="22"/>
    </location>
    <ligand>
        <name>RNA</name>
        <dbReference type="ChEBI" id="CHEBI:33697"/>
    </ligand>
</feature>
<feature type="binding site" evidence="7">
    <location>
        <position position="46"/>
    </location>
    <ligand>
        <name>RNA</name>
        <dbReference type="ChEBI" id="CHEBI:33697"/>
    </ligand>
</feature>
<feature type="binding site" evidence="7">
    <location>
        <position position="47"/>
    </location>
    <ligand>
        <name>RNA</name>
        <dbReference type="ChEBI" id="CHEBI:33697"/>
    </ligand>
</feature>
<feature type="binding site" evidence="7">
    <location>
        <position position="48"/>
    </location>
    <ligand>
        <name>RNA</name>
        <dbReference type="ChEBI" id="CHEBI:33697"/>
    </ligand>
</feature>
<feature type="binding site" evidence="7">
    <location>
        <position position="49"/>
    </location>
    <ligand>
        <name>RNA</name>
        <dbReference type="ChEBI" id="CHEBI:33697"/>
    </ligand>
</feature>
<feature type="binding site" evidence="7">
    <location>
        <position position="50"/>
    </location>
    <ligand>
        <name>RNA</name>
        <dbReference type="ChEBI" id="CHEBI:33697"/>
    </ligand>
</feature>
<feature type="binding site" evidence="7">
    <location>
        <position position="69"/>
    </location>
    <ligand>
        <name>RNA</name>
        <dbReference type="ChEBI" id="CHEBI:33697"/>
    </ligand>
</feature>
<feature type="binding site" evidence="7">
    <location>
        <position position="70"/>
    </location>
    <ligand>
        <name>RNA</name>
        <dbReference type="ChEBI" id="CHEBI:33697"/>
    </ligand>
</feature>
<feature type="binding site" evidence="7">
    <location>
        <position position="93"/>
    </location>
    <ligand>
        <name>RNA</name>
        <dbReference type="ChEBI" id="CHEBI:33697"/>
    </ligand>
</feature>
<feature type="binding site" evidence="7">
    <location>
        <position position="95"/>
    </location>
    <ligand>
        <name>RNA</name>
        <dbReference type="ChEBI" id="CHEBI:33697"/>
    </ligand>
</feature>
<feature type="binding site" evidence="7">
    <location>
        <position position="97"/>
    </location>
    <ligand>
        <name>RNA</name>
        <dbReference type="ChEBI" id="CHEBI:33697"/>
    </ligand>
</feature>
<feature type="binding site" evidence="7">
    <location>
        <position position="100"/>
    </location>
    <ligand>
        <name>RNA</name>
        <dbReference type="ChEBI" id="CHEBI:33697"/>
    </ligand>
</feature>
<feature type="binding site" evidence="11">
    <location>
        <begin position="1313"/>
        <end position="1320"/>
    </location>
    <ligand>
        <name>ATP</name>
        <dbReference type="ChEBI" id="CHEBI:30616"/>
    </ligand>
</feature>
<feature type="site" description="Cleavage" evidence="9">
    <location>
        <begin position="137"/>
        <end position="138"/>
    </location>
</feature>
<feature type="site" description="Cleavage; by protease 3C" evidence="3">
    <location>
        <begin position="393"/>
        <end position="394"/>
    </location>
</feature>
<feature type="site" description="Cleavage; by protease 3C" evidence="3">
    <location>
        <begin position="624"/>
        <end position="625"/>
    </location>
</feature>
<feature type="site" description="Cleavage; by protease 3C" evidence="3">
    <location>
        <begin position="901"/>
        <end position="902"/>
    </location>
</feature>
<feature type="site" description="Cleavage; by ribosomal skip" evidence="3">
    <location>
        <begin position="1044"/>
        <end position="1045"/>
    </location>
</feature>
<feature type="site" description="Cleavage; by protease 3C" evidence="3">
    <location>
        <begin position="1194"/>
        <end position="1195"/>
    </location>
</feature>
<feature type="site" description="Cleavage; by protease 3C" evidence="3">
    <location>
        <begin position="1519"/>
        <end position="1520"/>
    </location>
</feature>
<feature type="site" description="Cleavage; by protease 3C" evidence="3">
    <location>
        <begin position="1607"/>
        <end position="1608"/>
    </location>
</feature>
<feature type="site" description="Cleavage; by protease 3C" evidence="3">
    <location>
        <begin position="1627"/>
        <end position="1628"/>
    </location>
</feature>
<feature type="site" description="Cleavage; by protease 3C" evidence="3">
    <location>
        <begin position="1832"/>
        <end position="1833"/>
    </location>
</feature>
<feature type="modified residue" description="Phosphotyrosine; by host SYK" evidence="20">
    <location>
        <position position="41"/>
    </location>
</feature>
<feature type="modified residue" description="Phosphothreonine; by host CK2" evidence="20">
    <location>
        <position position="47"/>
    </location>
</feature>
<feature type="modified residue" description="O-(5'-phospho-RNA)-tyrosine" evidence="2">
    <location>
        <position position="1610"/>
    </location>
</feature>
<feature type="lipid moiety-binding region" description="N-myristoyl glycine; by host" evidence="8">
    <location>
        <position position="68"/>
    </location>
</feature>
<feature type="mutagenesis site" description="Complete loss of inhibitory activity of nucleocytoplasmic transport." evidence="15 16">
    <original>C</original>
    <variation>A</variation>
    <location>
        <position position="19"/>
    </location>
</feature>
<feature type="mutagenesis site" description="25% loss of 2A-Leader interaction." evidence="21">
    <original>K</original>
    <variation>Q</variation>
    <location>
        <position position="35"/>
    </location>
</feature>
<feature type="mutagenesis site" description="30% loss of 2A-Leader interaction." evidence="21">
    <original>D</original>
    <variation>A</variation>
    <location>
        <position position="37"/>
    </location>
</feature>
<feature type="mutagenesis site" description="20% loss of 2A-Leader interaction." evidence="21">
    <original>W</original>
    <variation>A</variation>
    <location>
        <position position="40"/>
    </location>
</feature>
<feature type="mutagenesis site" description="No effect on the inhibitory activity of nucleocytoplasmic transport." evidence="16">
    <original>Y</original>
    <variation>F</variation>
    <location>
        <position position="41"/>
    </location>
</feature>
<feature type="mutagenesis site" description="No effect on the inhibitory activity of nucleocytoplasmic transport." evidence="16">
    <original>T</original>
    <variation>A</variation>
    <location>
        <position position="47"/>
    </location>
</feature>
<feature type="mutagenesis site" description="5-10 fold decreased viral growth." evidence="18">
    <original>YY</original>
    <variation>AA</variation>
    <location>
        <begin position="993"/>
        <end position="994"/>
    </location>
</feature>
<feature type="mutagenesis site" description="No effect on viral growth." evidence="18">
    <original>R</original>
    <variation>A</variation>
    <location>
        <position position="996"/>
    </location>
</feature>
<feature type="mutagenesis site" description="5-10 fold decreased viral growth." evidence="18">
    <original>R</original>
    <variation>E</variation>
    <location>
        <position position="998"/>
    </location>
</feature>
<feature type="mutagenesis site" description="No effect on viral growth." evidence="18">
    <original>Q</original>
    <variation>A</variation>
    <location>
        <position position="1006"/>
    </location>
</feature>
<feature type="mutagenesis site" description="Complete loss of interaction with host EIF4E." evidence="18">
    <original>L</original>
    <variation>A</variation>
    <location>
        <position position="1035"/>
    </location>
</feature>
<sequence length="2292" mass="255459">MATTMEQETCAHSLTFEECPKCSALQYRNGFYLLKYDEEWYPEELLTDGEDDVFDPELDMEVVFELQGNSTSSDKNNSSSEGNEGVIINNFYSNQYQNSIDLSANAAGSDPPRTYGQFSNLFSGAVNAFSNMLPLLADQNTEEMENLSDRVSQDTAGNTVTNTQSTVGRLVGYGTVHDGEHPASCADTASEKILAVERYYTFKVNDWTSTQKPFEYIRIPLPHVLSGEDGGVFGAALRRHYLVKTGWRVQVQCNASQFHAGGLLVFMAPEYPTLDAFAMDNRWSKDNLPNGTRTQTNKKGPFAMDHQNFWQWTLYPHQFLNLRTNTTVDLEVPYVNIAPTSSWTQHASWTLVIAVVAPLTYSTGASTSLDITASIQPVRPVFNGLRHETLSRQSPIPVTIREHAGTWYSTLPDSTVPIYGKTPVAPSNYMVGEYKDFLEIAQIPTFIGNKIPNAVPYIEASNTAVKTQPLATYQVTLSCSCLANTFLAALSRNFAQYRGSLVYTFVFTGTAMMKGKFLIAYTPPGAGKPTSRDQAMQATYAIWDLGLNSSYSFTVPFISPTHFRMVGTDQVNITNADGWVTVWQLTPLTYPPGCPTSAKILTMVSAGKDFSLKMPISPAPWSPQGVENAEKGVTENTNATADFVAQPVYLPENQTKVAFFYNRSSPIGAFTVKSGSLESGFAPFSNGTCPNSVILTPGPQFDPAYDQLRPQRLTEIWGNGNEETSKVFPLKSKQDYSFCLFSPFVYYKCDLEVTLSPHTSGNHGLLVRWCPTGTPTKPTTQVLHEVSSLSEGRTPQVYSAGPGISNQISFVVPYNSPLSVLSAVWYNGHKRFDNTGSLGIAPNSDFGTLFFAGTKPDIKFTVYLRYKNKRVFCPRPTVFFPWPTSGDKIDMTPRAGVLMLESPNALDISRTYPTLHVLIQFNHRGLEVRLFRHGHFWAETRADVILRSKTKQVSFLSNGNYPSMDSRAPWNPWKNTYQAVLRAEPCRVTMDIYYKRVRPFRLPLVQKEWPVREENVFGLYRIFNAHYAGYFADLLIHDIETNPGPFMFRPRKQVFQTQGAAVSSMAQTLLPNDLASKAMGSAFTALLDANEDAQKAMKIIKTLSSLSDAWENVKETLNNPEFWKQLLSRCVQLIAGMTIAVMHPDPLTLLCLGTLTAAEITSQTSLCEEIAAKFKTIFITPPPRFPTISLFQQQSPLKQVNDIFSLAKNLDWAVKTVEKVVDWFGTWIVQEEKEQTLDQLLQRFPEHAKRISDLRNGMAAYVECKESFDFFEKLYNQAVKEKRTGIAAVCEKFRQKHDHATARCEPVVIVLRGDAGQGKSLSSQVIAQAVSKTIFGRQSVYSLPPDSDFFDGYENQFAAIMDDLGQNPDGSDFTTFCQMVSTTNFLPNMASLERKGTPFTSQLVVATTNLPEFRPVTIAHYPAVERRITFDYSVSAGPVCSKTEAGYKVLDVERAFRPTGEAPLPCFQNNCLFLEKAGLQFRDNRTKEIISLVDVIERAVARIERKKKVLTTVQTLVAQGPVDEVSFHSVVQQLKARQQATDEQLEELQEAFAKVQERNSVFSDWLKISAMLCAATLALSQVVKMAKAVKQMVKPDLVRVQLDEQEQGPYNETARVKPKTLQLLDIQGPNPVMDFEKYVAKHVTAPIGFVYPTGVSTQTCLLVRGRTLVVNRHMAESDWTSIVVRGVTHARSTVKILAIAKAGKETDVSFIRLSSGPLFRDNTSKFVKAGDVLPTGAAPVTGIMNTDIPMMYTGTFLKAGVSVPVETGQTFNHCIHYKANTRKGWCGSALLADLGGSKKILGIHSAGSMGIAAASIVSQEMIRAVVNAFEPQGALERLPDGPRIHVPRKTALRPTVARQVFQPAYAPAVLSKFDPRTEADVDEVAFSKHTSNQESLPPVFRMVAKEYANRVFTLLGKDNGRLTVKQALEGLEGMDPMDRNTSPGLPYTALGMRRTDVVDWESATLIPFAAERLRKMNEGDFSEVVYQTFLKDELRPIEKVQAAKTRIVDVPPFEHCILGRQLLGKFASKFQTQPGLELGSAIGCDPDVHWTAFGVAMQGFERVYDVDYSNFDSTHSVAMFRLLAEEFFTPENGFDPLTREYLESLAISTHAFEEKRFLITGGLPSGCAATSMLNTIMNNIIIRAGLYLTYKNFEFDDVKVLSYGDDLLVATNYQLDFDKVRASLAKTGYKITPANTTSTFPLNSTLEDVVFLKRKFKKEGPLYRPVMNREALEAMLSYYRPGTLSEKLTSITMLAVHSGKQEYDRLFAPFREVGVVVPSFESVEYRWRSLFW</sequence>
<accession>Q66765</accession>
<organism>
    <name type="scientific">Encephalomyocarditis virus (strain Rueckert)</name>
    <name type="common">EMCV</name>
    <dbReference type="NCBI Taxonomy" id="2870365"/>
    <lineage>
        <taxon>Viruses</taxon>
        <taxon>Riboviria</taxon>
        <taxon>Orthornavirae</taxon>
        <taxon>Pisuviricota</taxon>
        <taxon>Pisoniviricetes</taxon>
        <taxon>Picornavirales</taxon>
        <taxon>Picornaviridae</taxon>
        <taxon>Caphthovirinae</taxon>
        <taxon>Cardiovirus</taxon>
        <taxon>Cardiovirus A</taxon>
    </lineage>
</organism>
<keyword id="KW-0067">ATP-binding</keyword>
<keyword id="KW-0167">Capsid protein</keyword>
<keyword id="KW-0191">Covalent protein-RNA linkage</keyword>
<keyword id="KW-1262">Eukaryotic host gene expression shutoff by virus</keyword>
<keyword id="KW-1193">Eukaryotic host translation shutoff by virus</keyword>
<keyword id="KW-0347">Helicase</keyword>
<keyword id="KW-1035">Host cytoplasm</keyword>
<keyword id="KW-1036">Host cytoplasmic vesicle</keyword>
<keyword id="KW-1190">Host gene expression shutoff by virus</keyword>
<keyword id="KW-1043">Host membrane</keyword>
<keyword id="KW-1192">Host mRNA suppression by virus</keyword>
<keyword id="KW-1048">Host nucleus</keyword>
<keyword id="KW-0945">Host-virus interaction</keyword>
<keyword id="KW-0378">Hydrolase</keyword>
<keyword id="KW-1090">Inhibition of host innate immune response by virus</keyword>
<keyword id="KW-1099">Inhibition of host mRNA nuclear export by virus</keyword>
<keyword id="KW-1088">Inhibition of host RIG-I by virus</keyword>
<keyword id="KW-1113">Inhibition of host RLR pathway by virus</keyword>
<keyword id="KW-0407">Ion channel</keyword>
<keyword id="KW-0406">Ion transport</keyword>
<keyword id="KW-0449">Lipoprotein</keyword>
<keyword id="KW-0472">Membrane</keyword>
<keyword id="KW-0479">Metal-binding</keyword>
<keyword id="KW-0519">Myristate</keyword>
<keyword id="KW-0547">Nucleotide-binding</keyword>
<keyword id="KW-0548">Nucleotidyltransferase</keyword>
<keyword id="KW-0597">Phosphoprotein</keyword>
<keyword id="KW-0645">Protease</keyword>
<keyword id="KW-1185">Reference proteome</keyword>
<keyword id="KW-0688">Ribosomal frameshifting</keyword>
<keyword id="KW-0694">RNA-binding</keyword>
<keyword id="KW-0696">RNA-directed RNA polymerase</keyword>
<keyword id="KW-1143">T=pseudo3 icosahedral capsid protein</keyword>
<keyword id="KW-0788">Thiol protease</keyword>
<keyword id="KW-0808">Transferase</keyword>
<keyword id="KW-0813">Transport</keyword>
<keyword id="KW-1161">Viral attachment to host cell</keyword>
<keyword id="KW-0899">Viral immunoevasion</keyword>
<keyword id="KW-1182">Viral ion channel</keyword>
<keyword id="KW-0693">Viral RNA replication</keyword>
<keyword id="KW-0946">Virion</keyword>
<keyword id="KW-1160">Virus entry into host cell</keyword>
<keyword id="KW-0862">Zinc</keyword>
<keyword id="KW-0863">Zinc-finger</keyword>
<comment type="function">
    <molecule>Leader protein</molecule>
    <text evidence="15 16 17 22 23">Forms a complex with host RAN and probably binds to exportins carrying activated MAPK in order to mediate the hyperphosphorylation of host Phe/Gly containing nuclear pore proteins (Nups) resulting in cessation of active nucleocytoplasmic transport (PubMed:16888036, PubMed:19073724, PubMed:20881039, PubMed:26115166, PubMed:26492198). Proteins with NLS signals fail to import, cellular mRNAs fail to export, and some proteins small enough for diffusion are not retained anymore (efflux) (PubMed:16888036, PubMed:19073724, PubMed:20881039). The resulting inhibition of cellular protein synthesis serves to ensure maximal viral gene expression and to evade host immune response (PubMed:16888036, PubMed:19073724, PubMed:20881039).</text>
</comment>
<comment type="function">
    <molecule>Capsid protein VP1</molecule>
    <text evidence="7">Forms an icosahedral capsid of pseudo T=3 symmetry with capsid proteins VP2 and VP3. Together they form an icosahedral capsid composed of 60 copies of each VP1, VP2, and VP3, with a diameter of approximately 300 Angstroms. VP4 lies on the inner surface of the protein shell formed by VP1, VP2 and VP3. All the three latter proteins contain a beta-sheet structure called beta-barrel jelly roll. VP1 is situated at the 12 fivefold axes, whereas VP2 and VP3 are located at the quasi-sixfold axes.</text>
</comment>
<comment type="function">
    <molecule>Capsid protein VP2</molecule>
    <text evidence="7">Forms an icosahedral capsid of pseudo T=3 symmetry with capsid proteins VP2 and VP3. Together they form an icosahedral capsid composed of 60 copies of each VP1, VP2, and VP3, with a diameter of approximately 300 Angstroms. VP4 lies on the inner surface of the protein shell formed by VP1, VP2 and VP3. All the three latter proteins contain a beta-sheet structure called beta-barrel jelly roll. VP1 is situated at the 12 fivefold axes, whereas VP2 and VP3 are located at the quasi-sixfold axes.</text>
</comment>
<comment type="function">
    <molecule>Capsid protein VP3</molecule>
    <text evidence="7">Forms an icosahedral capsid of pseudo T=3 symmetry with capsid proteins VP2 and VP3. Together they form an icosahedral capsid composed of 60 copies of each VP1, VP2, and VP3, with a diameter of approximately 300 Angstroms. VP4 lies on the inner surface of the protein shell formed by VP1, VP2 and VP3. All the three latter proteins contain a beta-sheet structure called beta-barrel jelly roll. VP1 is situated at the 12 fivefold axes, whereas VP2 and VP3 are located at the quasi-sixfold axes.</text>
</comment>
<comment type="function">
    <molecule>Capsid protein VP4</molecule>
    <text evidence="2 7">Lies on the inner surface of the capsid shell (By similarity). After binding to the host receptor, the capsid undergoes conformational changes (By similarity). Capsid protein VP4 is released, capsid protein VP1 N-terminus is externalized, and together, they shape a pore in the host membrane through which the viral genome is translocated into the host cell cytoplasm (By similarity). After genome has been released, the channel shrinks (By similarity).</text>
</comment>
<comment type="function">
    <molecule>Capsid protein VP0</molecule>
    <text evidence="6">VP0 precursor is a component of immature procapsids.</text>
</comment>
<comment type="function">
    <molecule>Protein 2A</molecule>
    <text evidence="7 14 18 21 24">Involved in host translation shutoff by inhibiting cap-dependent mRNA translation (PubMed:12921995, PubMed:21145089). Nuclear localization is required for this function (PubMed:12921995, PubMed:21145089). The resulting inhibition of cellular protein synthesis serves to ensure maximal viral gene expression and to evade host immune response (Probable). Inhibits the phosphorylation of the leader protein (PubMed:25210192). Binds to the RNA stem-loop essential for the ribosomal frameshift event and trans-activates the production of protein 2B*.</text>
</comment>
<comment type="function">
    <molecule>Protein 2B</molecule>
    <text evidence="1">Affects membrane integrity and causes an increase in membrane permeability.</text>
</comment>
<comment type="function">
    <molecule>Protein 2C</molecule>
    <text evidence="3 4 5">Associates with and induces structural rearrangements of intracellular membranes (By similarity). It displays RNA-binding, nucleotide binding and NTPase activities (By similarity). Interacts with IFIH1/MDA5 to inhibit the induction of the IFN-beta signal pathway (By similarity).</text>
</comment>
<comment type="function">
    <molecule>Protein 3A</molecule>
    <text evidence="1">Serves as membrane anchor via its hydrophobic domain.</text>
</comment>
<comment type="function">
    <molecule>VPg</molecule>
    <text evidence="3">Forms a primer, VPg-pU, which is utilized by the polymerase for the initiation of RNA chains.</text>
</comment>
<comment type="function">
    <molecule>Protease 3C</molecule>
    <text evidence="3 7 19">Cysteine protease that generates mature viral proteins from the precursor polyprotein (By similarity). In addition to its proteolytic activity, it binds to viral RNA, and thus influences viral genome replication. RNA and substrate cooperatively bind to the protease. Cleaves host PABP1, this cleavage is important for viral replication (By similarity). Cleaves host TANK and disrupts the TANK-TBK1-IKKepsilon-IRF3 complex, thereby inhibiting the induction of the IFN-beta signal pathway (By similarity). Inhibits the integrated stress response (ISR) in the infected cell (PubMed:23785203). Impairs host stress granule formation by cleaving host G3BP1 (PubMed:23785203).</text>
</comment>
<comment type="function">
    <molecule>RNA-directed RNA polymerase</molecule>
    <text evidence="7">Replicates the genomic and antigenomic RNAs by recognizing replications specific signals (By similarity). Performs VPg uridylylation (By similarity).</text>
</comment>
<comment type="catalytic activity">
    <reaction evidence="10">
        <text>RNA(n) + a ribonucleoside 5'-triphosphate = RNA(n+1) + diphosphate</text>
        <dbReference type="Rhea" id="RHEA:21248"/>
        <dbReference type="Rhea" id="RHEA-COMP:14527"/>
        <dbReference type="Rhea" id="RHEA-COMP:17342"/>
        <dbReference type="ChEBI" id="CHEBI:33019"/>
        <dbReference type="ChEBI" id="CHEBI:61557"/>
        <dbReference type="ChEBI" id="CHEBI:140395"/>
        <dbReference type="EC" id="2.7.7.48"/>
    </reaction>
</comment>
<comment type="catalytic activity">
    <reaction evidence="24">
        <text>ATP + H2O = ADP + phosphate + H(+)</text>
        <dbReference type="Rhea" id="RHEA:13065"/>
        <dbReference type="ChEBI" id="CHEBI:15377"/>
        <dbReference type="ChEBI" id="CHEBI:15378"/>
        <dbReference type="ChEBI" id="CHEBI:30616"/>
        <dbReference type="ChEBI" id="CHEBI:43474"/>
        <dbReference type="ChEBI" id="CHEBI:456216"/>
        <dbReference type="EC" id="3.6.4.13"/>
    </reaction>
</comment>
<comment type="catalytic activity">
    <reaction evidence="12">
        <text>Selective cleavage of Gln-|-Gly bond in the poliovirus polyprotein. In other picornavirus reactions Glu may be substituted for Gln, and Ser or Thr for Gly.</text>
        <dbReference type="EC" id="3.4.22.28"/>
    </reaction>
</comment>
<comment type="subunit">
    <molecule>Protease 3C</molecule>
    <text evidence="3">Interacts with host TRIM22; this interaction leads to the ubiquitination of protease 3C and may restrict the virus replication (By similarity).</text>
</comment>
<comment type="subunit">
    <molecule>Protein 2A</molecule>
    <text evidence="18 21">Interacts with host EIF4E (PubMed:21145089). Interacts with the leader protein (PubMed:25210192).</text>
</comment>
<comment type="subunit">
    <molecule>Leader protein</molecule>
    <text evidence="15 21 23">Interacts with host RAN; the complex L-RAN recruits cellular kinases responsible for the L-induced nucleocytoplasmic trafficking inhibition (PubMed:16888036). The complex L-RAN can further bind to the host exportins XPO1/CRM1 and CSE1L/CAS (PubMed:26492198). Interacts with the protein 2A (PubMed:25210192).</text>
</comment>
<comment type="subunit">
    <molecule>Protein 2C</molecule>
    <text evidence="3">Interacts with host IFIH1/MDA5; this interaction inhibits the induction of the IFN-beta signal pathway (By similarity).</text>
</comment>
<comment type="subcellular location">
    <molecule>Capsid protein VP2</molecule>
    <subcellularLocation>
        <location evidence="7">Virion</location>
    </subcellularLocation>
    <subcellularLocation>
        <location evidence="24">Host cytoplasm</location>
    </subcellularLocation>
</comment>
<comment type="subcellular location">
    <molecule>Capsid protein VP3</molecule>
    <subcellularLocation>
        <location evidence="7">Virion</location>
    </subcellularLocation>
    <subcellularLocation>
        <location evidence="24">Host cytoplasm</location>
    </subcellularLocation>
</comment>
<comment type="subcellular location">
    <molecule>Capsid protein VP1</molecule>
    <subcellularLocation>
        <location evidence="7">Virion</location>
    </subcellularLocation>
    <subcellularLocation>
        <location evidence="24">Host cytoplasm</location>
    </subcellularLocation>
</comment>
<comment type="subcellular location">
    <molecule>Protein 2A</molecule>
    <subcellularLocation>
        <location evidence="14 18">Host nucleus</location>
        <location evidence="14 18">Host nucleolus</location>
    </subcellularLocation>
</comment>
<comment type="subcellular location">
    <molecule>Protein 2B</molecule>
    <subcellularLocation>
        <location evidence="24">Host cytoplasmic vesicle membrane</location>
        <topology evidence="24">Peripheral membrane protein</topology>
        <orientation evidence="24">Cytoplasmic side</orientation>
    </subcellularLocation>
    <text evidence="24">Probably localizes to the surface of intracellular membrane vesicles that are induced after virus infection as the site for viral RNA replication. These vesicles are probably autophagosome-like vesicles.</text>
</comment>
<comment type="subcellular location">
    <molecule>Protein 2C</molecule>
    <subcellularLocation>
        <location evidence="24">Host cytoplasmic vesicle membrane</location>
        <topology evidence="24">Peripheral membrane protein</topology>
        <orientation evidence="24">Cytoplasmic side</orientation>
    </subcellularLocation>
    <text evidence="24">Probably localizes to the surface of intracellular membrane vesicles that are induced after virus infection as the site for viral RNA replication. These vesicles are probably autophagosome-like vesicles.</text>
</comment>
<comment type="subcellular location">
    <molecule>Protein 3A</molecule>
    <subcellularLocation>
        <location evidence="3">Host cytoplasmic vesicle membrane</location>
        <topology evidence="24">Peripheral membrane protein</topology>
        <orientation evidence="24">Cytoplasmic side</orientation>
    </subcellularLocation>
    <text evidence="3">Probably localizes to the surface of intracellular membrane vesicles that are induced after virus infection as the site for viral RNA replication. These vesicles are probably autophagosome-like vesicles.</text>
</comment>
<comment type="subcellular location">
    <molecule>VPg</molecule>
    <subcellularLocation>
        <location evidence="24">Virion</location>
    </subcellularLocation>
</comment>
<comment type="subcellular location">
    <molecule>Protease 3C</molecule>
    <subcellularLocation>
        <location evidence="24">Host cytoplasm</location>
    </subcellularLocation>
</comment>
<comment type="subcellular location">
    <molecule>RNA-directed RNA polymerase</molecule>
    <subcellularLocation>
        <location evidence="24">Host cytoplasmic vesicle membrane</location>
        <topology evidence="24">Peripheral membrane protein</topology>
        <orientation evidence="24">Cytoplasmic side</orientation>
    </subcellularLocation>
    <text evidence="24">Probably localizes to the surface of intracellular membrane vesicles that are induced after virus infection as the site for viral RNA replication. These vesicles are probably autophagosome-like vesicles.</text>
</comment>
<comment type="alternative products">
    <event type="ribosomal frameshifting"/>
    <isoform>
        <id>Q66765-1</id>
        <name>Genome polyprotein</name>
        <sequence type="displayed"/>
    </isoform>
    <isoform>
        <id>P0DJX6-1</id>
        <name>2B*</name>
        <sequence type="external"/>
    </isoform>
</comment>
<comment type="PTM">
    <molecule>Leader protein</molecule>
    <text evidence="13 20">Phosphorylated.</text>
</comment>
<comment type="PTM">
    <molecule>Genome polyprotein</molecule>
    <text evidence="3">Specific enzymatic cleavages by the viral protease in vivo yield a variety of precursors and mature proteins (By similarity). The polyprotein seems to be cotranslationally cleaved at the 2A/2B junction by a ribosomal skip from one codon to the next without formation of a peptide bond (By similarity). This process would release the P1-2A peptide from the translational complex (By similarity).</text>
</comment>
<comment type="PTM">
    <molecule>Capsid protein VP0</molecule>
    <text evidence="2">During virion maturation, immature virions are rendered infectious following cleavage of VP0 into VP4 and VP2. This maturation seems to be an autocatalytic event triggered by the presence of RNA in the capsid and is followed by a conformational change of the particle.</text>
</comment>
<comment type="PTM">
    <molecule>VPg</molecule>
    <text evidence="7">Uridylylated by the polymerase and is covalently linked to the 5'-end of genomic RNA. This uridylylated form acts as a nucleotide-peptide primer for the polymerase.</text>
</comment>
<comment type="PTM">
    <molecule>Capsid protein VP4</molecule>
    <text evidence="8">Myristoylation is required during RNA encapsidation and formation of the mature virus particle.</text>
</comment>
<comment type="miscellaneous">
    <molecule>Isoform Genome polyprotein</molecule>
    <text evidence="7">Produced by conventional translation.</text>
</comment>
<comment type="similarity">
    <text evidence="24">Belongs to the picornaviruses polyprotein family.</text>
</comment>
<reference key="1">
    <citation type="journal article" date="1992" name="J. Virol.">
        <title>Sequence and structural elements that contribute to efficient encephalomyocarditis virus RNA translation.</title>
        <authorList>
            <person name="Duke G.M."/>
            <person name="Hoffman M.A."/>
            <person name="Palmenberg A.C."/>
        </authorList>
    </citation>
    <scope>NUCLEOTIDE SEQUENCE [GENOMIC RNA]</scope>
</reference>
<reference key="2">
    <citation type="journal article" date="2001" name="Virology">
        <title>Leader protein of encephalomyocarditis virus binds zinc, is phosphorylated during viral infection, and affects the efficiency of genome translation.</title>
        <authorList>
            <person name="Dvorak C.M."/>
            <person name="Hall D.J."/>
            <person name="Hill M."/>
            <person name="Riddle M."/>
            <person name="Pranter A."/>
            <person name="Dillman J."/>
            <person name="Deibel M."/>
            <person name="Palmenberg A.C."/>
        </authorList>
    </citation>
    <scope>PHOSPHORYLATION (LEADER PROTEIN)</scope>
</reference>
<reference key="3">
    <citation type="journal article" date="2003" name="Virus Res.">
        <title>Encephalomyocarditis viral protein 2A localizes to nucleoli and inhibits cap-dependent mRNA translation.</title>
        <authorList>
            <person name="Aminev A.G."/>
            <person name="Amineva S.P."/>
            <person name="Palmenberg A.C."/>
        </authorList>
    </citation>
    <scope>FUNCTION (PROTEIN 2A)</scope>
    <scope>SUBCELLULAR LOCATION (PROTEIN 2A)</scope>
</reference>
<reference key="4">
    <citation type="journal article" date="2006" name="Proc. Natl. Acad. Sci. U.S.A.">
        <title>A picornavirus protein interacts with Ran-GTPase and disrupts nucleocytoplasmic transport.</title>
        <authorList>
            <person name="Porter F.W."/>
            <person name="Bochkov Y.A."/>
            <person name="Albee A.J."/>
            <person name="Wiese C."/>
            <person name="Palmenberg A.C."/>
        </authorList>
    </citation>
    <scope>FUNCTION (LEADER PROTEIN)</scope>
    <scope>INTERACTION WITH HOST RAN (LEADER PROTEIN)</scope>
    <scope>MUTAGENESIS OF CYS-19</scope>
</reference>
<reference key="5">
    <citation type="journal article" date="2009" name="J. Virol.">
        <title>Leader-induced phosphorylation of nucleoporins correlates with nuclear trafficking inhibition by cardioviruses.</title>
        <authorList>
            <person name="Porter F.W."/>
            <person name="Palmenberg A.C."/>
        </authorList>
    </citation>
    <scope>FUNCTION (LEADER PROTEIN)</scope>
    <scope>MUTAGENESIS OF CYS-19; TYR-41 AND THR-47</scope>
</reference>
<reference key="6">
    <citation type="journal article" date="2010" name="J. Virol.">
        <title>Nucleoporin phosphorylation triggered by the encephalomyocarditis virus leader protein is mediated by mitogen-activated protein kinases.</title>
        <authorList>
            <person name="Porter F.W."/>
            <person name="Brown B."/>
            <person name="Palmenberg A.C."/>
        </authorList>
    </citation>
    <scope>FUNCTION (LEADER PROTEIN)</scope>
</reference>
<reference key="7">
    <citation type="journal article" date="2011" name="Virology">
        <title>Mutational analysis of the EMCV 2A protein identifies a nuclear localization signal and an eIF4E binding site.</title>
        <authorList>
            <person name="Groppo R."/>
            <person name="Brown B.A."/>
            <person name="Palmenberg A.C."/>
        </authorList>
    </citation>
    <scope>FUNCTION (PROTEIN 2A)</scope>
    <scope>SUBCELLULAR LOCATION (PROTEIN 2A)</scope>
    <scope>INTERACTION WITH HUMAN EIF4E (PROTEIN 2A)</scope>
    <scope>MUTAGENESIS OF 993-TYR-TYR-994; ARG-996; ARG-998; GLN-1006 AND LEU-1035</scope>
</reference>
<reference key="8">
    <citation type="journal article" date="2013" name="J. Virol.">
        <title>Encephalomyocarditis virus disrupts stress granules, the critical platform for triggering antiviral innate immune responses.</title>
        <authorList>
            <person name="Ng C.S."/>
            <person name="Jogi M."/>
            <person name="Yoo J.S."/>
            <person name="Onomoto K."/>
            <person name="Koike S."/>
            <person name="Iwasaki T."/>
            <person name="Yoneyama M."/>
            <person name="Kato H."/>
            <person name="Fujita T."/>
        </authorList>
    </citation>
    <scope>FUNCTION (PROTEASE 3C)</scope>
</reference>
<reference key="9">
    <citation type="journal article" date="2014" name="J. Virol.">
        <title>Binding interactions between the encephalomyocarditis virus leader and protein 2A.</title>
        <authorList>
            <person name="Petty R.V."/>
            <person name="Basta H.A."/>
            <person name="Bacot-Davis V.R."/>
            <person name="Brown B.A."/>
            <person name="Palmenberg A.C."/>
        </authorList>
    </citation>
    <scope>INTERACTION WITH THE LEADER PROTEIN (PROTEIN 2A)</scope>
    <scope>INTERACTION WITH PROTEIN 2A (LEADER PROTEIN)</scope>
    <scope>FUNCTION (PROTEIN 2A)</scope>
    <scope>MUTAGENESIS OF LYS-35; ASP-37 AND TRP-40</scope>
</reference>
<reference key="10">
    <citation type="journal article" date="2014" name="J. Virol.">
        <title>Encephalomyocarditis virus leader is phosphorylated by CK2 and syk as a requirement for subsequent phosphorylation of cellular nucleoporins.</title>
        <authorList>
            <person name="Basta H.A."/>
            <person name="Bacot-Davis V.R."/>
            <person name="Ciomperlik J.J."/>
            <person name="Palmenberg A.C."/>
        </authorList>
    </citation>
    <scope>PHOSPHORYLATION AT TYR-41 AND THR-47</scope>
    <scope>MUTAGENESIS OF TYR-41 AND THR-47</scope>
</reference>
<reference key="11">
    <citation type="journal article" date="2015" name="Virology">
        <title>Three cardiovirus leader proteins equivalently inhibit four different nucleocytoplasmic trafficking pathways.</title>
        <authorList>
            <person name="Ciomperlik J.J."/>
            <person name="Basta H.A."/>
            <person name="Palmenberg A.C."/>
        </authorList>
    </citation>
    <scope>FUNCTION (LEADER PROTEIN)</scope>
</reference>
<reference key="12">
    <citation type="journal article" date="2016" name="Virology">
        <title>Cardiovirus Leader proteins bind exportins: Implications for virus replication and nucleocytoplasmic trafficking inhibition.</title>
        <authorList>
            <person name="Ciomperlik J.J."/>
            <person name="Basta H.A."/>
            <person name="Palmenberg A.C."/>
        </authorList>
    </citation>
    <scope>FUNCTION (LEADER PROTEIN)</scope>
    <scope>INTERACTION WITH XPO1/CRM1 (LEADER PROTEIN)</scope>
    <scope>INTERACTION WITH CSE1L/CAS (LEADER PROTEIN)</scope>
</reference>